<reference key="1">
    <citation type="journal article" date="2006" name="Genome Res.">
        <title>Skewed genomic variability in strains of the toxigenic bacterial pathogen, Clostridium perfringens.</title>
        <authorList>
            <person name="Myers G.S.A."/>
            <person name="Rasko D.A."/>
            <person name="Cheung J.K."/>
            <person name="Ravel J."/>
            <person name="Seshadri R."/>
            <person name="DeBoy R.T."/>
            <person name="Ren Q."/>
            <person name="Varga J."/>
            <person name="Awad M.M."/>
            <person name="Brinkac L.M."/>
            <person name="Daugherty S.C."/>
            <person name="Haft D.H."/>
            <person name="Dodson R.J."/>
            <person name="Madupu R."/>
            <person name="Nelson W.C."/>
            <person name="Rosovitz M.J."/>
            <person name="Sullivan S.A."/>
            <person name="Khouri H."/>
            <person name="Dimitrov G.I."/>
            <person name="Watkins K.L."/>
            <person name="Mulligan S."/>
            <person name="Benton J."/>
            <person name="Radune D."/>
            <person name="Fisher D.J."/>
            <person name="Atkins H.S."/>
            <person name="Hiscox T."/>
            <person name="Jost B.H."/>
            <person name="Billington S.J."/>
            <person name="Songer J.G."/>
            <person name="McClane B.A."/>
            <person name="Titball R.W."/>
            <person name="Rood J.I."/>
            <person name="Melville S.B."/>
            <person name="Paulsen I.T."/>
        </authorList>
    </citation>
    <scope>NUCLEOTIDE SEQUENCE [LARGE SCALE GENOMIC DNA]</scope>
    <source>
        <strain>ATCC 13124 / DSM 756 / JCM 1290 / NCIMB 6125 / NCTC 8237 / S 107 / Type A</strain>
    </source>
</reference>
<proteinExistence type="inferred from homology"/>
<protein>
    <recommendedName>
        <fullName>Acylphosphatase</fullName>
        <ecNumber>3.6.1.7</ecNumber>
    </recommendedName>
    <alternativeName>
        <fullName>Acylphosphate phosphohydrolase</fullName>
    </alternativeName>
</protein>
<comment type="catalytic activity">
    <reaction>
        <text>an acyl phosphate + H2O = a carboxylate + phosphate + H(+)</text>
        <dbReference type="Rhea" id="RHEA:14965"/>
        <dbReference type="ChEBI" id="CHEBI:15377"/>
        <dbReference type="ChEBI" id="CHEBI:15378"/>
        <dbReference type="ChEBI" id="CHEBI:29067"/>
        <dbReference type="ChEBI" id="CHEBI:43474"/>
        <dbReference type="ChEBI" id="CHEBI:59918"/>
        <dbReference type="EC" id="3.6.1.7"/>
    </reaction>
</comment>
<comment type="similarity">
    <text evidence="2">Belongs to the acylphosphatase family.</text>
</comment>
<accession>Q0TNY8</accession>
<evidence type="ECO:0000255" key="1">
    <source>
        <dbReference type="PROSITE-ProRule" id="PRU00520"/>
    </source>
</evidence>
<evidence type="ECO:0000305" key="2"/>
<keyword id="KW-0378">Hydrolase</keyword>
<dbReference type="EC" id="3.6.1.7"/>
<dbReference type="EMBL" id="CP000246">
    <property type="protein sequence ID" value="ABG84315.1"/>
    <property type="molecule type" value="Genomic_DNA"/>
</dbReference>
<dbReference type="RefSeq" id="WP_003461780.1">
    <property type="nucleotide sequence ID" value="NC_008261.1"/>
</dbReference>
<dbReference type="SMR" id="Q0TNY8"/>
<dbReference type="STRING" id="195103.CPF_2228"/>
<dbReference type="PaxDb" id="195103-CPF_2228"/>
<dbReference type="KEGG" id="cpf:CPF_2228"/>
<dbReference type="eggNOG" id="COG1254">
    <property type="taxonomic scope" value="Bacteria"/>
</dbReference>
<dbReference type="HOGENOM" id="CLU_141932_2_1_9"/>
<dbReference type="Proteomes" id="UP000001823">
    <property type="component" value="Chromosome"/>
</dbReference>
<dbReference type="GO" id="GO:0003998">
    <property type="term" value="F:acylphosphatase activity"/>
    <property type="evidence" value="ECO:0007669"/>
    <property type="project" value="UniProtKB-EC"/>
</dbReference>
<dbReference type="Gene3D" id="3.30.70.100">
    <property type="match status" value="1"/>
</dbReference>
<dbReference type="InterPro" id="IPR020456">
    <property type="entry name" value="Acylphosphatase"/>
</dbReference>
<dbReference type="InterPro" id="IPR001792">
    <property type="entry name" value="Acylphosphatase-like_dom"/>
</dbReference>
<dbReference type="InterPro" id="IPR036046">
    <property type="entry name" value="Acylphosphatase-like_dom_sf"/>
</dbReference>
<dbReference type="InterPro" id="IPR017968">
    <property type="entry name" value="Acylphosphatase_CS"/>
</dbReference>
<dbReference type="PANTHER" id="PTHR47268">
    <property type="entry name" value="ACYLPHOSPHATASE"/>
    <property type="match status" value="1"/>
</dbReference>
<dbReference type="PANTHER" id="PTHR47268:SF4">
    <property type="entry name" value="ACYLPHOSPHATASE"/>
    <property type="match status" value="1"/>
</dbReference>
<dbReference type="Pfam" id="PF00708">
    <property type="entry name" value="Acylphosphatase"/>
    <property type="match status" value="1"/>
</dbReference>
<dbReference type="SUPFAM" id="SSF54975">
    <property type="entry name" value="Acylphosphatase/BLUF domain-like"/>
    <property type="match status" value="1"/>
</dbReference>
<dbReference type="PROSITE" id="PS00150">
    <property type="entry name" value="ACYLPHOSPHATASE_1"/>
    <property type="match status" value="1"/>
</dbReference>
<dbReference type="PROSITE" id="PS51160">
    <property type="entry name" value="ACYLPHOSPHATASE_3"/>
    <property type="match status" value="1"/>
</dbReference>
<gene>
    <name type="primary">acyP</name>
    <name type="ordered locus">CPF_2228</name>
</gene>
<organism>
    <name type="scientific">Clostridium perfringens (strain ATCC 13124 / DSM 756 / JCM 1290 / NCIMB 6125 / NCTC 8237 / Type A)</name>
    <dbReference type="NCBI Taxonomy" id="195103"/>
    <lineage>
        <taxon>Bacteria</taxon>
        <taxon>Bacillati</taxon>
        <taxon>Bacillota</taxon>
        <taxon>Clostridia</taxon>
        <taxon>Eubacteriales</taxon>
        <taxon>Clostridiaceae</taxon>
        <taxon>Clostridium</taxon>
    </lineage>
</organism>
<feature type="chain" id="PRO_0000326686" description="Acylphosphatase">
    <location>
        <begin position="1"/>
        <end position="89"/>
    </location>
</feature>
<feature type="domain" description="Acylphosphatase-like" evidence="1">
    <location>
        <begin position="3"/>
        <end position="89"/>
    </location>
</feature>
<feature type="active site" evidence="1">
    <location>
        <position position="18"/>
    </location>
</feature>
<feature type="active site" evidence="1">
    <location>
        <position position="36"/>
    </location>
</feature>
<name>ACYP_CLOP1</name>
<sequence>MIRKEFLVSGRVQGVGFRFFCKYQASLLSLTGYAENLDDGQVLIEVQGDESSIRKFKTKILNGNGFSRVISIDEKDLTVDTREKRFSTY</sequence>